<keyword id="KW-1185">Reference proteome</keyword>
<dbReference type="EMBL" id="M75136">
    <property type="protein sequence ID" value="AAA88194.1"/>
    <property type="molecule type" value="Genomic_DNA"/>
</dbReference>
<dbReference type="EMBL" id="M75136">
    <property type="protein sequence ID" value="AAA88116.1"/>
    <property type="molecule type" value="Genomic_DNA"/>
</dbReference>
<dbReference type="PIR" id="E36787">
    <property type="entry name" value="E36787"/>
</dbReference>
<dbReference type="KEGG" id="vg:1488412"/>
<dbReference type="KEGG" id="vg:1488421"/>
<dbReference type="Proteomes" id="UP000007643">
    <property type="component" value="Segment"/>
</dbReference>
<reference key="1">
    <citation type="journal article" date="1992" name="Virology">
        <title>Channel catfish virus: a new type of herpesvirus.</title>
        <authorList>
            <person name="Davison A.J."/>
        </authorList>
    </citation>
    <scope>NUCLEOTIDE SEQUENCE [LARGE SCALE GENOMIC DNA]</scope>
</reference>
<organism>
    <name type="scientific">Ictalurid herpesvirus 1 (strain Auburn)</name>
    <name type="common">IcHV-1</name>
    <name type="synonym">Channel catfish herpesvirus</name>
    <dbReference type="NCBI Taxonomy" id="766178"/>
    <lineage>
        <taxon>Viruses</taxon>
        <taxon>Duplodnaviria</taxon>
        <taxon>Heunggongvirae</taxon>
        <taxon>Peploviricota</taxon>
        <taxon>Herviviricetes</taxon>
        <taxon>Herpesvirales</taxon>
        <taxon>Alloherpesviridae</taxon>
        <taxon>Ictavirus</taxon>
        <taxon>Ictavirus ictaluridallo1</taxon>
        <taxon>Ictalurid herpesvirus 1</taxon>
    </lineage>
</organism>
<feature type="chain" id="PRO_0000222099" description="Uncharacterized protein ORF13">
    <location>
        <begin position="1"/>
        <end position="82"/>
    </location>
</feature>
<gene>
    <name type="primary">ORF13</name>
</gene>
<proteinExistence type="predicted"/>
<protein>
    <recommendedName>
        <fullName>Uncharacterized protein ORF13</fullName>
    </recommendedName>
</protein>
<sequence length="82" mass="8821">MAFLLPFLCNCCNPMSLLCGGGCDLISCCCRGGGWQPMARQPIYPYGSPMGAHVYYPPPVAQPPVRGPVRVPQGERPVDGLR</sequence>
<accession>Q00166</accession>
<name>VG13_ICHVA</name>
<organismHost>
    <name type="scientific">Ictaluridae</name>
    <name type="common">bullhead catfishes</name>
    <dbReference type="NCBI Taxonomy" id="7996"/>
</organismHost>